<protein>
    <recommendedName>
        <fullName evidence="1">Translation initiation factor IF-1</fullName>
    </recommendedName>
</protein>
<feature type="chain" id="PRO_0000338770" description="Translation initiation factor IF-1">
    <location>
        <begin position="1"/>
        <end position="72"/>
    </location>
</feature>
<feature type="domain" description="S1-like" evidence="1">
    <location>
        <begin position="1"/>
        <end position="72"/>
    </location>
</feature>
<reference key="1">
    <citation type="journal article" date="2007" name="Nat. Genet.">
        <title>Genomic analysis of Bartonella identifies type IV secretion systems as host adaptability factors.</title>
        <authorList>
            <person name="Saenz H.L."/>
            <person name="Engel P."/>
            <person name="Stoeckli M.C."/>
            <person name="Lanz C."/>
            <person name="Raddatz G."/>
            <person name="Vayssier-Taussat M."/>
            <person name="Birtles R."/>
            <person name="Schuster S.C."/>
            <person name="Dehio C."/>
        </authorList>
    </citation>
    <scope>NUCLEOTIDE SEQUENCE [LARGE SCALE GENOMIC DNA]</scope>
    <source>
        <strain>CIP 105476 / IBS 506</strain>
    </source>
</reference>
<gene>
    <name evidence="1" type="primary">infA</name>
    <name type="ordered locus">BT_2036</name>
</gene>
<name>IF1_BART1</name>
<accession>A9IXQ8</accession>
<keyword id="KW-0963">Cytoplasm</keyword>
<keyword id="KW-0396">Initiation factor</keyword>
<keyword id="KW-0648">Protein biosynthesis</keyword>
<keyword id="KW-0694">RNA-binding</keyword>
<keyword id="KW-0699">rRNA-binding</keyword>
<comment type="function">
    <text evidence="1">One of the essential components for the initiation of protein synthesis. Stabilizes the binding of IF-2 and IF-3 on the 30S subunit to which N-formylmethionyl-tRNA(fMet) subsequently binds. Helps modulate mRNA selection, yielding the 30S pre-initiation complex (PIC). Upon addition of the 50S ribosomal subunit IF-1, IF-2 and IF-3 are released leaving the mature 70S translation initiation complex.</text>
</comment>
<comment type="subunit">
    <text evidence="1">Component of the 30S ribosomal translation pre-initiation complex which assembles on the 30S ribosome in the order IF-2 and IF-3, IF-1 and N-formylmethionyl-tRNA(fMet); mRNA recruitment can occur at any time during PIC assembly.</text>
</comment>
<comment type="subcellular location">
    <subcellularLocation>
        <location evidence="1">Cytoplasm</location>
    </subcellularLocation>
</comment>
<comment type="similarity">
    <text evidence="1">Belongs to the IF-1 family.</text>
</comment>
<sequence>MSKEEVLEFSGVVTELLPNAMFRVKLENDHEIIAHTAGRMRKNRIRVLAGDKIMVEMTPYDLTKGRITYRYK</sequence>
<evidence type="ECO:0000255" key="1">
    <source>
        <dbReference type="HAMAP-Rule" id="MF_00075"/>
    </source>
</evidence>
<proteinExistence type="inferred from homology"/>
<dbReference type="EMBL" id="AM260525">
    <property type="protein sequence ID" value="CAK02221.1"/>
    <property type="molecule type" value="Genomic_DNA"/>
</dbReference>
<dbReference type="RefSeq" id="WP_010702900.1">
    <property type="nucleotide sequence ID" value="NC_010161.1"/>
</dbReference>
<dbReference type="SMR" id="A9IXQ8"/>
<dbReference type="KEGG" id="btr:BT_2036"/>
<dbReference type="eggNOG" id="COG0361">
    <property type="taxonomic scope" value="Bacteria"/>
</dbReference>
<dbReference type="HOGENOM" id="CLU_151267_1_0_5"/>
<dbReference type="Proteomes" id="UP000001592">
    <property type="component" value="Chromosome"/>
</dbReference>
<dbReference type="GO" id="GO:0005829">
    <property type="term" value="C:cytosol"/>
    <property type="evidence" value="ECO:0007669"/>
    <property type="project" value="TreeGrafter"/>
</dbReference>
<dbReference type="GO" id="GO:0043022">
    <property type="term" value="F:ribosome binding"/>
    <property type="evidence" value="ECO:0007669"/>
    <property type="project" value="UniProtKB-UniRule"/>
</dbReference>
<dbReference type="GO" id="GO:0019843">
    <property type="term" value="F:rRNA binding"/>
    <property type="evidence" value="ECO:0007669"/>
    <property type="project" value="UniProtKB-UniRule"/>
</dbReference>
<dbReference type="GO" id="GO:0003743">
    <property type="term" value="F:translation initiation factor activity"/>
    <property type="evidence" value="ECO:0007669"/>
    <property type="project" value="UniProtKB-UniRule"/>
</dbReference>
<dbReference type="CDD" id="cd04451">
    <property type="entry name" value="S1_IF1"/>
    <property type="match status" value="1"/>
</dbReference>
<dbReference type="FunFam" id="2.40.50.140:FF:000002">
    <property type="entry name" value="Translation initiation factor IF-1"/>
    <property type="match status" value="1"/>
</dbReference>
<dbReference type="Gene3D" id="2.40.50.140">
    <property type="entry name" value="Nucleic acid-binding proteins"/>
    <property type="match status" value="1"/>
</dbReference>
<dbReference type="HAMAP" id="MF_00075">
    <property type="entry name" value="IF_1"/>
    <property type="match status" value="1"/>
</dbReference>
<dbReference type="InterPro" id="IPR012340">
    <property type="entry name" value="NA-bd_OB-fold"/>
</dbReference>
<dbReference type="InterPro" id="IPR006196">
    <property type="entry name" value="RNA-binding_domain_S1_IF1"/>
</dbReference>
<dbReference type="InterPro" id="IPR004368">
    <property type="entry name" value="TIF_IF1"/>
</dbReference>
<dbReference type="NCBIfam" id="TIGR00008">
    <property type="entry name" value="infA"/>
    <property type="match status" value="1"/>
</dbReference>
<dbReference type="PANTHER" id="PTHR33370">
    <property type="entry name" value="TRANSLATION INITIATION FACTOR IF-1, CHLOROPLASTIC"/>
    <property type="match status" value="1"/>
</dbReference>
<dbReference type="PANTHER" id="PTHR33370:SF1">
    <property type="entry name" value="TRANSLATION INITIATION FACTOR IF-1, CHLOROPLASTIC"/>
    <property type="match status" value="1"/>
</dbReference>
<dbReference type="Pfam" id="PF01176">
    <property type="entry name" value="eIF-1a"/>
    <property type="match status" value="1"/>
</dbReference>
<dbReference type="SUPFAM" id="SSF50249">
    <property type="entry name" value="Nucleic acid-binding proteins"/>
    <property type="match status" value="1"/>
</dbReference>
<dbReference type="PROSITE" id="PS50832">
    <property type="entry name" value="S1_IF1_TYPE"/>
    <property type="match status" value="1"/>
</dbReference>
<organism>
    <name type="scientific">Bartonella tribocorum (strain CIP 105476 / IBS 506)</name>
    <dbReference type="NCBI Taxonomy" id="382640"/>
    <lineage>
        <taxon>Bacteria</taxon>
        <taxon>Pseudomonadati</taxon>
        <taxon>Pseudomonadota</taxon>
        <taxon>Alphaproteobacteria</taxon>
        <taxon>Hyphomicrobiales</taxon>
        <taxon>Bartonellaceae</taxon>
        <taxon>Bartonella</taxon>
    </lineage>
</organism>